<name>PAPD1_MOUSE</name>
<feature type="transit peptide" description="Mitochondrion" evidence="3">
    <location>
        <begin position="1"/>
        <end position="37"/>
    </location>
</feature>
<feature type="chain" id="PRO_0000250690" description="Poly(A) RNA polymerase, mitochondrial">
    <location>
        <begin position="38"/>
        <end position="585"/>
    </location>
</feature>
<feature type="domain" description="PAP-associated">
    <location>
        <begin position="441"/>
        <end position="486"/>
    </location>
</feature>
<feature type="region of interest" description="Disordered" evidence="4">
    <location>
        <begin position="537"/>
        <end position="585"/>
    </location>
</feature>
<feature type="compositionally biased region" description="Polar residues" evidence="4">
    <location>
        <begin position="564"/>
        <end position="585"/>
    </location>
</feature>
<feature type="binding site" evidence="3">
    <location>
        <begin position="107"/>
        <end position="109"/>
    </location>
    <ligand>
        <name>ATP</name>
        <dbReference type="ChEBI" id="CHEBI:30616"/>
    </ligand>
</feature>
<feature type="binding site" evidence="3">
    <location>
        <begin position="244"/>
        <end position="245"/>
    </location>
    <ligand>
        <name>ATP</name>
        <dbReference type="ChEBI" id="CHEBI:30616"/>
    </ligand>
</feature>
<feature type="binding site" evidence="3">
    <location>
        <position position="246"/>
    </location>
    <ligand>
        <name>Mg(2+)</name>
        <dbReference type="ChEBI" id="CHEBI:18420"/>
        <note>catalytic</note>
    </ligand>
</feature>
<feature type="binding site" evidence="3">
    <location>
        <position position="248"/>
    </location>
    <ligand>
        <name>Mg(2+)</name>
        <dbReference type="ChEBI" id="CHEBI:18420"/>
        <note>catalytic</note>
    </ligand>
</feature>
<feature type="modified residue" description="N6-acetyllysine" evidence="2">
    <location>
        <position position="90"/>
    </location>
</feature>
<feature type="sequence conflict" description="In Ref. 2; BAE22572." evidence="5" ref="2">
    <original>A</original>
    <variation>S</variation>
    <location>
        <position position="74"/>
    </location>
</feature>
<feature type="sequence conflict" description="In Ref. 2; BAC36396." evidence="5" ref="2">
    <original>E</original>
    <variation>G</variation>
    <location>
        <position position="190"/>
    </location>
</feature>
<feature type="sequence conflict" description="In Ref. 2; BAE22572." evidence="5" ref="2">
    <original>M</original>
    <variation>T</variation>
    <location>
        <position position="249"/>
    </location>
</feature>
<feature type="sequence conflict" description="In Ref. 2; BAC36396." evidence="5" ref="2">
    <original>K</original>
    <variation>E</variation>
    <location>
        <position position="578"/>
    </location>
</feature>
<comment type="function">
    <text evidence="1">Polymerase that creates the 3' poly(A) tail of mitochondrial transcripts. Can use all four nucleotides, but has higher activity with ATP and UTP (in vitro). Plays a role in replication-dependent histone mRNA degradation. May be involved in the terminal uridylation of mature histone mRNAs before their degradation is initiated. Might be responsible for the creation of some UAA stop codons which are not encoded in mtDNA (By similarity).</text>
</comment>
<comment type="catalytic activity">
    <reaction>
        <text>RNA(n) + ATP = RNA(n)-3'-adenine ribonucleotide + diphosphate</text>
        <dbReference type="Rhea" id="RHEA:11332"/>
        <dbReference type="Rhea" id="RHEA-COMP:14527"/>
        <dbReference type="Rhea" id="RHEA-COMP:17347"/>
        <dbReference type="ChEBI" id="CHEBI:30616"/>
        <dbReference type="ChEBI" id="CHEBI:33019"/>
        <dbReference type="ChEBI" id="CHEBI:140395"/>
        <dbReference type="ChEBI" id="CHEBI:173115"/>
        <dbReference type="EC" id="2.7.7.19"/>
    </reaction>
</comment>
<comment type="cofactor">
    <cofactor evidence="1">
        <name>Mg(2+)</name>
        <dbReference type="ChEBI" id="CHEBI:18420"/>
    </cofactor>
    <cofactor evidence="1">
        <name>Mn(2+)</name>
        <dbReference type="ChEBI" id="CHEBI:29035"/>
    </cofactor>
</comment>
<comment type="subunit">
    <text evidence="1">Homodimer.</text>
</comment>
<comment type="subcellular location">
    <subcellularLocation>
        <location evidence="2">Cytoplasm</location>
    </subcellularLocation>
    <subcellularLocation>
        <location evidence="2">Mitochondrion</location>
    </subcellularLocation>
</comment>
<comment type="similarity">
    <text evidence="5">Belongs to the DNA polymerase type-B-like family.</text>
</comment>
<gene>
    <name type="primary">Mtpap</name>
    <name type="synonym">Papd1</name>
</gene>
<evidence type="ECO:0000250" key="1"/>
<evidence type="ECO:0000250" key="2">
    <source>
        <dbReference type="UniProtKB" id="Q9NVV4"/>
    </source>
</evidence>
<evidence type="ECO:0000255" key="3"/>
<evidence type="ECO:0000256" key="4">
    <source>
        <dbReference type="SAM" id="MobiDB-lite"/>
    </source>
</evidence>
<evidence type="ECO:0000305" key="5"/>
<sequence length="585" mass="65229">MAARGVGLLTRLPVCSQRRNRIPRSISRLLSCPGTIAASIGSEEQSSVVAETGIEDKTLQKKFSEVQKERREQAQRTVLIHCPNNINEKKFLKYLSQHGPVNNHFFYESFGLFAVVEFCQKDSIKSLQNGTHTPTQSTEAAIPFKSRFLNLRLKNPSSQVSGQPFVQTTNQSPPSSKKLFELLSYAESIEEQLNTLLKAFQLTEENIRLRHLTCSLIEDIAAAYFPSCVIRPFGSSVNTFGKLGCDLDMFLDLDETGKLDVHKNTGNFFMEFQVKNVPSERIATQKILSVIGECLDNFGPGCVGVQKILNARCPLVRFSHQGSGFQCDLTANNSIALKSSELLYIYGSLDSRVRALVFSVRCWARAHSLTSSIPGAWITNFSLTVMVIFFLQRRSPPILPTLDSLKSIADAEDRCILEGNNCTFVQDVNKIQPSGNTETLELLIKEFFEYFGNFAFNKNSINIRQGREQNKPDSSPLYIQNPFETSLNISKNVSQSQLQKFVELARDSAWILEQEDKNQPFSSSRQPWGLAALLLPPGSGHTSLSRKKKKKPMSEKVKGLLASIKSNSPDSSTDTSGKRTISTQA</sequence>
<dbReference type="EC" id="2.7.7.19"/>
<dbReference type="EMBL" id="AK011546">
    <property type="protein sequence ID" value="BAB27689.1"/>
    <property type="molecule type" value="mRNA"/>
</dbReference>
<dbReference type="EMBL" id="AK076565">
    <property type="protein sequence ID" value="BAC36396.1"/>
    <property type="molecule type" value="mRNA"/>
</dbReference>
<dbReference type="EMBL" id="AK135537">
    <property type="protein sequence ID" value="BAE22572.1"/>
    <property type="molecule type" value="mRNA"/>
</dbReference>
<dbReference type="EMBL" id="BC057643">
    <property type="protein sequence ID" value="AAH57643.1"/>
    <property type="molecule type" value="mRNA"/>
</dbReference>
<dbReference type="CCDS" id="CCDS37718.1"/>
<dbReference type="RefSeq" id="NP_080433.1">
    <property type="nucleotide sequence ID" value="NM_026157.4"/>
</dbReference>
<dbReference type="SMR" id="Q9D0D3"/>
<dbReference type="BioGRID" id="212187">
    <property type="interactions" value="3"/>
</dbReference>
<dbReference type="FunCoup" id="Q9D0D3">
    <property type="interactions" value="5033"/>
</dbReference>
<dbReference type="STRING" id="10090.ENSMUSP00000025077"/>
<dbReference type="GlyGen" id="Q9D0D3">
    <property type="glycosylation" value="1 site, 1 O-linked glycan (1 site)"/>
</dbReference>
<dbReference type="iPTMnet" id="Q9D0D3"/>
<dbReference type="PhosphoSitePlus" id="Q9D0D3"/>
<dbReference type="SwissPalm" id="Q9D0D3"/>
<dbReference type="jPOST" id="Q9D0D3"/>
<dbReference type="PaxDb" id="10090-ENSMUSP00000025077"/>
<dbReference type="PeptideAtlas" id="Q9D0D3"/>
<dbReference type="ProteomicsDB" id="288055"/>
<dbReference type="Pumba" id="Q9D0D3"/>
<dbReference type="Antibodypedia" id="35309">
    <property type="antibodies" value="108 antibodies from 17 providers"/>
</dbReference>
<dbReference type="Ensembl" id="ENSMUST00000025077.7">
    <property type="protein sequence ID" value="ENSMUSP00000025077.7"/>
    <property type="gene ID" value="ENSMUSG00000024234.8"/>
</dbReference>
<dbReference type="GeneID" id="67440"/>
<dbReference type="KEGG" id="mmu:67440"/>
<dbReference type="UCSC" id="uc008dyi.1">
    <property type="organism name" value="mouse"/>
</dbReference>
<dbReference type="AGR" id="MGI:1914690"/>
<dbReference type="CTD" id="55149"/>
<dbReference type="MGI" id="MGI:1914690">
    <property type="gene designation" value="Mtpap"/>
</dbReference>
<dbReference type="VEuPathDB" id="HostDB:ENSMUSG00000024234"/>
<dbReference type="eggNOG" id="KOG2277">
    <property type="taxonomic scope" value="Eukaryota"/>
</dbReference>
<dbReference type="GeneTree" id="ENSGT00940000158582"/>
<dbReference type="HOGENOM" id="CLU_018757_3_1_1"/>
<dbReference type="InParanoid" id="Q9D0D3"/>
<dbReference type="OMA" id="GKHATKM"/>
<dbReference type="OrthoDB" id="434989at2759"/>
<dbReference type="PhylomeDB" id="Q9D0D3"/>
<dbReference type="TreeFam" id="TF354308"/>
<dbReference type="BioGRID-ORCS" id="67440">
    <property type="hits" value="19 hits in 81 CRISPR screens"/>
</dbReference>
<dbReference type="ChiTaRS" id="Mtpap">
    <property type="organism name" value="mouse"/>
</dbReference>
<dbReference type="PRO" id="PR:Q9D0D3"/>
<dbReference type="Proteomes" id="UP000000589">
    <property type="component" value="Chromosome 18"/>
</dbReference>
<dbReference type="RNAct" id="Q9D0D3">
    <property type="molecule type" value="protein"/>
</dbReference>
<dbReference type="Bgee" id="ENSMUSG00000024234">
    <property type="expression patterns" value="Expressed in manus and 233 other cell types or tissues"/>
</dbReference>
<dbReference type="ExpressionAtlas" id="Q9D0D3">
    <property type="expression patterns" value="baseline and differential"/>
</dbReference>
<dbReference type="GO" id="GO:0005739">
    <property type="term" value="C:mitochondrion"/>
    <property type="evidence" value="ECO:0007005"/>
    <property type="project" value="MGI"/>
</dbReference>
<dbReference type="GO" id="GO:0005654">
    <property type="term" value="C:nucleoplasm"/>
    <property type="evidence" value="ECO:0007669"/>
    <property type="project" value="Ensembl"/>
</dbReference>
<dbReference type="GO" id="GO:0005524">
    <property type="term" value="F:ATP binding"/>
    <property type="evidence" value="ECO:0000250"/>
    <property type="project" value="UniProtKB"/>
</dbReference>
<dbReference type="GO" id="GO:0000287">
    <property type="term" value="F:magnesium ion binding"/>
    <property type="evidence" value="ECO:0000250"/>
    <property type="project" value="UniProtKB"/>
</dbReference>
<dbReference type="GO" id="GO:0030145">
    <property type="term" value="F:manganese ion binding"/>
    <property type="evidence" value="ECO:0000250"/>
    <property type="project" value="UniProtKB"/>
</dbReference>
<dbReference type="GO" id="GO:1990817">
    <property type="term" value="F:poly(A) RNA polymerase activity"/>
    <property type="evidence" value="ECO:0000250"/>
    <property type="project" value="UniProtKB"/>
</dbReference>
<dbReference type="GO" id="GO:0042803">
    <property type="term" value="F:protein homodimerization activity"/>
    <property type="evidence" value="ECO:0007669"/>
    <property type="project" value="Ensembl"/>
</dbReference>
<dbReference type="GO" id="GO:0003723">
    <property type="term" value="F:RNA binding"/>
    <property type="evidence" value="ECO:0007669"/>
    <property type="project" value="UniProtKB-KW"/>
</dbReference>
<dbReference type="GO" id="GO:0002134">
    <property type="term" value="F:UTP binding"/>
    <property type="evidence" value="ECO:0000250"/>
    <property type="project" value="UniProtKB"/>
</dbReference>
<dbReference type="GO" id="GO:0071044">
    <property type="term" value="P:histone mRNA catabolic process"/>
    <property type="evidence" value="ECO:0000250"/>
    <property type="project" value="UniProtKB"/>
</dbReference>
<dbReference type="GO" id="GO:0000965">
    <property type="term" value="P:mitochondrial RNA 3'-end processing"/>
    <property type="evidence" value="ECO:0000250"/>
    <property type="project" value="UniProtKB"/>
</dbReference>
<dbReference type="GO" id="GO:0006397">
    <property type="term" value="P:mRNA processing"/>
    <property type="evidence" value="ECO:0007669"/>
    <property type="project" value="UniProtKB-KW"/>
</dbReference>
<dbReference type="CDD" id="cd05402">
    <property type="entry name" value="NT_PAP_TUTase"/>
    <property type="match status" value="1"/>
</dbReference>
<dbReference type="Gene3D" id="1.10.1410.10">
    <property type="match status" value="1"/>
</dbReference>
<dbReference type="Gene3D" id="3.30.460.10">
    <property type="entry name" value="Beta Polymerase, domain 2"/>
    <property type="match status" value="1"/>
</dbReference>
<dbReference type="InterPro" id="IPR054708">
    <property type="entry name" value="MTPAP-like_central"/>
</dbReference>
<dbReference type="InterPro" id="IPR043519">
    <property type="entry name" value="NT_sf"/>
</dbReference>
<dbReference type="InterPro" id="IPR002058">
    <property type="entry name" value="PAP_assoc"/>
</dbReference>
<dbReference type="InterPro" id="IPR041252">
    <property type="entry name" value="RL"/>
</dbReference>
<dbReference type="PANTHER" id="PTHR12271">
    <property type="entry name" value="POLY A POLYMERASE CID PAP -RELATED"/>
    <property type="match status" value="1"/>
</dbReference>
<dbReference type="PANTHER" id="PTHR12271:SF133">
    <property type="entry name" value="POLY(A) RNA POLYMERASE, MITOCHONDRIAL"/>
    <property type="match status" value="1"/>
</dbReference>
<dbReference type="Pfam" id="PF22600">
    <property type="entry name" value="MTPAP-like_central"/>
    <property type="match status" value="1"/>
</dbReference>
<dbReference type="Pfam" id="PF03828">
    <property type="entry name" value="PAP_assoc"/>
    <property type="match status" value="1"/>
</dbReference>
<dbReference type="Pfam" id="PF17797">
    <property type="entry name" value="RL"/>
    <property type="match status" value="1"/>
</dbReference>
<dbReference type="SUPFAM" id="SSF81301">
    <property type="entry name" value="Nucleotidyltransferase"/>
    <property type="match status" value="1"/>
</dbReference>
<dbReference type="SUPFAM" id="SSF81631">
    <property type="entry name" value="PAP/OAS1 substrate-binding domain"/>
    <property type="match status" value="1"/>
</dbReference>
<accession>Q9D0D3</accession>
<accession>Q3UXJ1</accession>
<accession>Q8C651</accession>
<proteinExistence type="evidence at protein level"/>
<organism>
    <name type="scientific">Mus musculus</name>
    <name type="common">Mouse</name>
    <dbReference type="NCBI Taxonomy" id="10090"/>
    <lineage>
        <taxon>Eukaryota</taxon>
        <taxon>Metazoa</taxon>
        <taxon>Chordata</taxon>
        <taxon>Craniata</taxon>
        <taxon>Vertebrata</taxon>
        <taxon>Euteleostomi</taxon>
        <taxon>Mammalia</taxon>
        <taxon>Eutheria</taxon>
        <taxon>Euarchontoglires</taxon>
        <taxon>Glires</taxon>
        <taxon>Rodentia</taxon>
        <taxon>Myomorpha</taxon>
        <taxon>Muroidea</taxon>
        <taxon>Muridae</taxon>
        <taxon>Murinae</taxon>
        <taxon>Mus</taxon>
        <taxon>Mus</taxon>
    </lineage>
</organism>
<protein>
    <recommendedName>
        <fullName>Poly(A) RNA polymerase, mitochondrial</fullName>
        <shortName>PAP</shortName>
        <ecNumber>2.7.7.19</ecNumber>
    </recommendedName>
    <alternativeName>
        <fullName>PAP-associated domain-containing protein 1</fullName>
    </alternativeName>
    <alternativeName>
        <fullName>Polynucleotide adenylyltransferase</fullName>
    </alternativeName>
</protein>
<keyword id="KW-0007">Acetylation</keyword>
<keyword id="KW-0067">ATP-binding</keyword>
<keyword id="KW-0963">Cytoplasm</keyword>
<keyword id="KW-0460">Magnesium</keyword>
<keyword id="KW-0464">Manganese</keyword>
<keyword id="KW-0479">Metal-binding</keyword>
<keyword id="KW-0496">Mitochondrion</keyword>
<keyword id="KW-0507">mRNA processing</keyword>
<keyword id="KW-0547">Nucleotide-binding</keyword>
<keyword id="KW-1185">Reference proteome</keyword>
<keyword id="KW-0694">RNA-binding</keyword>
<keyword id="KW-0804">Transcription</keyword>
<keyword id="KW-0808">Transferase</keyword>
<keyword id="KW-0809">Transit peptide</keyword>
<reference key="1">
    <citation type="journal article" date="2005" name="Science">
        <title>The transcriptional landscape of the mammalian genome.</title>
        <authorList>
            <person name="Carninci P."/>
            <person name="Kasukawa T."/>
            <person name="Katayama S."/>
            <person name="Gough J."/>
            <person name="Frith M.C."/>
            <person name="Maeda N."/>
            <person name="Oyama R."/>
            <person name="Ravasi T."/>
            <person name="Lenhard B."/>
            <person name="Wells C."/>
            <person name="Kodzius R."/>
            <person name="Shimokawa K."/>
            <person name="Bajic V.B."/>
            <person name="Brenner S.E."/>
            <person name="Batalov S."/>
            <person name="Forrest A.R."/>
            <person name="Zavolan M."/>
            <person name="Davis M.J."/>
            <person name="Wilming L.G."/>
            <person name="Aidinis V."/>
            <person name="Allen J.E."/>
            <person name="Ambesi-Impiombato A."/>
            <person name="Apweiler R."/>
            <person name="Aturaliya R.N."/>
            <person name="Bailey T.L."/>
            <person name="Bansal M."/>
            <person name="Baxter L."/>
            <person name="Beisel K.W."/>
            <person name="Bersano T."/>
            <person name="Bono H."/>
            <person name="Chalk A.M."/>
            <person name="Chiu K.P."/>
            <person name="Choudhary V."/>
            <person name="Christoffels A."/>
            <person name="Clutterbuck D.R."/>
            <person name="Crowe M.L."/>
            <person name="Dalla E."/>
            <person name="Dalrymple B.P."/>
            <person name="de Bono B."/>
            <person name="Della Gatta G."/>
            <person name="di Bernardo D."/>
            <person name="Down T."/>
            <person name="Engstrom P."/>
            <person name="Fagiolini M."/>
            <person name="Faulkner G."/>
            <person name="Fletcher C.F."/>
            <person name="Fukushima T."/>
            <person name="Furuno M."/>
            <person name="Futaki S."/>
            <person name="Gariboldi M."/>
            <person name="Georgii-Hemming P."/>
            <person name="Gingeras T.R."/>
            <person name="Gojobori T."/>
            <person name="Green R.E."/>
            <person name="Gustincich S."/>
            <person name="Harbers M."/>
            <person name="Hayashi Y."/>
            <person name="Hensch T.K."/>
            <person name="Hirokawa N."/>
            <person name="Hill D."/>
            <person name="Huminiecki L."/>
            <person name="Iacono M."/>
            <person name="Ikeo K."/>
            <person name="Iwama A."/>
            <person name="Ishikawa T."/>
            <person name="Jakt M."/>
            <person name="Kanapin A."/>
            <person name="Katoh M."/>
            <person name="Kawasawa Y."/>
            <person name="Kelso J."/>
            <person name="Kitamura H."/>
            <person name="Kitano H."/>
            <person name="Kollias G."/>
            <person name="Krishnan S.P."/>
            <person name="Kruger A."/>
            <person name="Kummerfeld S.K."/>
            <person name="Kurochkin I.V."/>
            <person name="Lareau L.F."/>
            <person name="Lazarevic D."/>
            <person name="Lipovich L."/>
            <person name="Liu J."/>
            <person name="Liuni S."/>
            <person name="McWilliam S."/>
            <person name="Madan Babu M."/>
            <person name="Madera M."/>
            <person name="Marchionni L."/>
            <person name="Matsuda H."/>
            <person name="Matsuzawa S."/>
            <person name="Miki H."/>
            <person name="Mignone F."/>
            <person name="Miyake S."/>
            <person name="Morris K."/>
            <person name="Mottagui-Tabar S."/>
            <person name="Mulder N."/>
            <person name="Nakano N."/>
            <person name="Nakauchi H."/>
            <person name="Ng P."/>
            <person name="Nilsson R."/>
            <person name="Nishiguchi S."/>
            <person name="Nishikawa S."/>
            <person name="Nori F."/>
            <person name="Ohara O."/>
            <person name="Okazaki Y."/>
            <person name="Orlando V."/>
            <person name="Pang K.C."/>
            <person name="Pavan W.J."/>
            <person name="Pavesi G."/>
            <person name="Pesole G."/>
            <person name="Petrovsky N."/>
            <person name="Piazza S."/>
            <person name="Reed J."/>
            <person name="Reid J.F."/>
            <person name="Ring B.Z."/>
            <person name="Ringwald M."/>
            <person name="Rost B."/>
            <person name="Ruan Y."/>
            <person name="Salzberg S.L."/>
            <person name="Sandelin A."/>
            <person name="Schneider C."/>
            <person name="Schoenbach C."/>
            <person name="Sekiguchi K."/>
            <person name="Semple C.A."/>
            <person name="Seno S."/>
            <person name="Sessa L."/>
            <person name="Sheng Y."/>
            <person name="Shibata Y."/>
            <person name="Shimada H."/>
            <person name="Shimada K."/>
            <person name="Silva D."/>
            <person name="Sinclair B."/>
            <person name="Sperling S."/>
            <person name="Stupka E."/>
            <person name="Sugiura K."/>
            <person name="Sultana R."/>
            <person name="Takenaka Y."/>
            <person name="Taki K."/>
            <person name="Tammoja K."/>
            <person name="Tan S.L."/>
            <person name="Tang S."/>
            <person name="Taylor M.S."/>
            <person name="Tegner J."/>
            <person name="Teichmann S.A."/>
            <person name="Ueda H.R."/>
            <person name="van Nimwegen E."/>
            <person name="Verardo R."/>
            <person name="Wei C.L."/>
            <person name="Yagi K."/>
            <person name="Yamanishi H."/>
            <person name="Zabarovsky E."/>
            <person name="Zhu S."/>
            <person name="Zimmer A."/>
            <person name="Hide W."/>
            <person name="Bult C."/>
            <person name="Grimmond S.M."/>
            <person name="Teasdale R.D."/>
            <person name="Liu E.T."/>
            <person name="Brusic V."/>
            <person name="Quackenbush J."/>
            <person name="Wahlestedt C."/>
            <person name="Mattick J.S."/>
            <person name="Hume D.A."/>
            <person name="Kai C."/>
            <person name="Sasaki D."/>
            <person name="Tomaru Y."/>
            <person name="Fukuda S."/>
            <person name="Kanamori-Katayama M."/>
            <person name="Suzuki M."/>
            <person name="Aoki J."/>
            <person name="Arakawa T."/>
            <person name="Iida J."/>
            <person name="Imamura K."/>
            <person name="Itoh M."/>
            <person name="Kato T."/>
            <person name="Kawaji H."/>
            <person name="Kawagashira N."/>
            <person name="Kawashima T."/>
            <person name="Kojima M."/>
            <person name="Kondo S."/>
            <person name="Konno H."/>
            <person name="Nakano K."/>
            <person name="Ninomiya N."/>
            <person name="Nishio T."/>
            <person name="Okada M."/>
            <person name="Plessy C."/>
            <person name="Shibata K."/>
            <person name="Shiraki T."/>
            <person name="Suzuki S."/>
            <person name="Tagami M."/>
            <person name="Waki K."/>
            <person name="Watahiki A."/>
            <person name="Okamura-Oho Y."/>
            <person name="Suzuki H."/>
            <person name="Kawai J."/>
            <person name="Hayashizaki Y."/>
        </authorList>
    </citation>
    <scope>NUCLEOTIDE SEQUENCE [LARGE SCALE MRNA]</scope>
    <source>
        <strain>C57BL/6J</strain>
        <tissue>Embryo</tissue>
        <tissue>Muellerian duct</tissue>
        <tissue>Testis</tissue>
    </source>
</reference>
<reference key="2">
    <citation type="journal article" date="2004" name="Genome Res.">
        <title>The status, quality, and expansion of the NIH full-length cDNA project: the Mammalian Gene Collection (MGC).</title>
        <authorList>
            <consortium name="The MGC Project Team"/>
        </authorList>
    </citation>
    <scope>NUCLEOTIDE SEQUENCE [LARGE SCALE MRNA]</scope>
    <source>
        <strain>FVB/N</strain>
        <tissue>Mammary tumor</tissue>
    </source>
</reference>
<reference key="3">
    <citation type="journal article" date="2010" name="Cell">
        <title>A tissue-specific atlas of mouse protein phosphorylation and expression.</title>
        <authorList>
            <person name="Huttlin E.L."/>
            <person name="Jedrychowski M.P."/>
            <person name="Elias J.E."/>
            <person name="Goswami T."/>
            <person name="Rad R."/>
            <person name="Beausoleil S.A."/>
            <person name="Villen J."/>
            <person name="Haas W."/>
            <person name="Sowa M.E."/>
            <person name="Gygi S.P."/>
        </authorList>
    </citation>
    <scope>IDENTIFICATION BY MASS SPECTROMETRY [LARGE SCALE ANALYSIS]</scope>
    <source>
        <tissue>Brown adipose tissue</tissue>
        <tissue>Spleen</tissue>
    </source>
</reference>